<accession>Q6G2M7</accession>
<comment type="function">
    <text evidence="1">Necessary for efficient RNA polymerase transcription elongation past template-encoded arresting sites. The arresting sites in DNA have the property of trapping a certain fraction of elongating RNA polymerases that pass through, resulting in locked ternary complexes. Cleavage of the nascent transcript by cleavage factors such as GreA or GreB allows the resumption of elongation from the new 3'terminus. GreA releases sequences of 2 to 3 nucleotides.</text>
</comment>
<comment type="similarity">
    <text evidence="1">Belongs to the GreA/GreB family.</text>
</comment>
<keyword id="KW-0238">DNA-binding</keyword>
<keyword id="KW-0804">Transcription</keyword>
<keyword id="KW-0805">Transcription regulation</keyword>
<organism>
    <name type="scientific">Bartonella henselae (strain ATCC 49882 / DSM 28221 / CCUG 30454 / Houston 1)</name>
    <name type="common">Rochalimaea henselae</name>
    <dbReference type="NCBI Taxonomy" id="283166"/>
    <lineage>
        <taxon>Bacteria</taxon>
        <taxon>Pseudomonadati</taxon>
        <taxon>Pseudomonadota</taxon>
        <taxon>Alphaproteobacteria</taxon>
        <taxon>Hyphomicrobiales</taxon>
        <taxon>Bartonellaceae</taxon>
        <taxon>Bartonella</taxon>
    </lineage>
</organism>
<proteinExistence type="inferred from homology"/>
<feature type="chain" id="PRO_1000075860" description="Transcription elongation factor GreA">
    <location>
        <begin position="1"/>
        <end position="157"/>
    </location>
</feature>
<protein>
    <recommendedName>
        <fullName evidence="1">Transcription elongation factor GreA</fullName>
    </recommendedName>
    <alternativeName>
        <fullName evidence="1">Transcript cleavage factor GreA</fullName>
    </alternativeName>
</protein>
<reference key="1">
    <citation type="journal article" date="2004" name="Proc. Natl. Acad. Sci. U.S.A.">
        <title>The louse-borne human pathogen Bartonella quintana is a genomic derivative of the zoonotic agent Bartonella henselae.</title>
        <authorList>
            <person name="Alsmark U.C.M."/>
            <person name="Frank A.C."/>
            <person name="Karlberg E.O."/>
            <person name="Legault B.-A."/>
            <person name="Ardell D.H."/>
            <person name="Canbaeck B."/>
            <person name="Eriksson A.-S."/>
            <person name="Naeslund A.K."/>
            <person name="Handley S.A."/>
            <person name="Huvet M."/>
            <person name="La Scola B."/>
            <person name="Holmberg M."/>
            <person name="Andersson S.G.E."/>
        </authorList>
    </citation>
    <scope>NUCLEOTIDE SEQUENCE [LARGE SCALE GENOMIC DNA]</scope>
    <source>
        <strain>ATCC 49882 / DSM 28221 / CCUG 30454 / Houston 1</strain>
    </source>
</reference>
<sequence length="157" mass="17505">MEKVPMTTAGFESLKEELRWRQQEERPRIIEAISEARAHGDLSGNAEYHAAKEAQSHNEGRINELEDYIARAEVINVSRLSGDKIKFGATIKLLDEDTEEKKVYQIVGDQEADVKTGKISISSPIARALIGKQEGDVIEVNAPGGAHNYEIIEVQYI</sequence>
<name>GREA_BARHE</name>
<dbReference type="EMBL" id="BX897699">
    <property type="protein sequence ID" value="CAF27953.1"/>
    <property type="molecule type" value="Genomic_DNA"/>
</dbReference>
<dbReference type="RefSeq" id="WP_011181010.1">
    <property type="nucleotide sequence ID" value="NC_005956.1"/>
</dbReference>
<dbReference type="SMR" id="Q6G2M7"/>
<dbReference type="PaxDb" id="283166-BH11700"/>
<dbReference type="EnsemblBacteria" id="CAF27953">
    <property type="protein sequence ID" value="CAF27953"/>
    <property type="gene ID" value="BH11700"/>
</dbReference>
<dbReference type="KEGG" id="bhe:BH11700"/>
<dbReference type="eggNOG" id="COG0782">
    <property type="taxonomic scope" value="Bacteria"/>
</dbReference>
<dbReference type="OrthoDB" id="9808774at2"/>
<dbReference type="Proteomes" id="UP000000421">
    <property type="component" value="Chromosome"/>
</dbReference>
<dbReference type="GO" id="GO:0003677">
    <property type="term" value="F:DNA binding"/>
    <property type="evidence" value="ECO:0007669"/>
    <property type="project" value="UniProtKB-UniRule"/>
</dbReference>
<dbReference type="GO" id="GO:0070063">
    <property type="term" value="F:RNA polymerase binding"/>
    <property type="evidence" value="ECO:0007669"/>
    <property type="project" value="InterPro"/>
</dbReference>
<dbReference type="GO" id="GO:0006354">
    <property type="term" value="P:DNA-templated transcription elongation"/>
    <property type="evidence" value="ECO:0007669"/>
    <property type="project" value="TreeGrafter"/>
</dbReference>
<dbReference type="GO" id="GO:0032784">
    <property type="term" value="P:regulation of DNA-templated transcription elongation"/>
    <property type="evidence" value="ECO:0007669"/>
    <property type="project" value="UniProtKB-UniRule"/>
</dbReference>
<dbReference type="FunFam" id="1.10.287.180:FF:000001">
    <property type="entry name" value="Transcription elongation factor GreA"/>
    <property type="match status" value="1"/>
</dbReference>
<dbReference type="FunFam" id="3.10.50.30:FF:000001">
    <property type="entry name" value="Transcription elongation factor GreA"/>
    <property type="match status" value="1"/>
</dbReference>
<dbReference type="Gene3D" id="3.10.50.30">
    <property type="entry name" value="Transcription elongation factor, GreA/GreB, C-terminal domain"/>
    <property type="match status" value="1"/>
</dbReference>
<dbReference type="Gene3D" id="1.10.287.180">
    <property type="entry name" value="Transcription elongation factor, GreA/GreB, N-terminal domain"/>
    <property type="match status" value="1"/>
</dbReference>
<dbReference type="HAMAP" id="MF_00105">
    <property type="entry name" value="GreA_GreB"/>
    <property type="match status" value="1"/>
</dbReference>
<dbReference type="InterPro" id="IPR036953">
    <property type="entry name" value="GreA/GreB_C_sf"/>
</dbReference>
<dbReference type="InterPro" id="IPR018151">
    <property type="entry name" value="TF_GreA/GreB_CS"/>
</dbReference>
<dbReference type="InterPro" id="IPR006359">
    <property type="entry name" value="Tscrpt_elong_fac_GreA"/>
</dbReference>
<dbReference type="InterPro" id="IPR028624">
    <property type="entry name" value="Tscrpt_elong_fac_GreA/B"/>
</dbReference>
<dbReference type="InterPro" id="IPR001437">
    <property type="entry name" value="Tscrpt_elong_fac_GreA/B_C"/>
</dbReference>
<dbReference type="InterPro" id="IPR023459">
    <property type="entry name" value="Tscrpt_elong_fac_GreA/B_fam"/>
</dbReference>
<dbReference type="InterPro" id="IPR022691">
    <property type="entry name" value="Tscrpt_elong_fac_GreA/B_N"/>
</dbReference>
<dbReference type="InterPro" id="IPR036805">
    <property type="entry name" value="Tscrpt_elong_fac_GreA/B_N_sf"/>
</dbReference>
<dbReference type="NCBIfam" id="TIGR01462">
    <property type="entry name" value="greA"/>
    <property type="match status" value="1"/>
</dbReference>
<dbReference type="NCBIfam" id="NF001261">
    <property type="entry name" value="PRK00226.1-2"/>
    <property type="match status" value="1"/>
</dbReference>
<dbReference type="NCBIfam" id="NF001263">
    <property type="entry name" value="PRK00226.1-4"/>
    <property type="match status" value="1"/>
</dbReference>
<dbReference type="NCBIfam" id="NF001264">
    <property type="entry name" value="PRK00226.1-5"/>
    <property type="match status" value="1"/>
</dbReference>
<dbReference type="PANTHER" id="PTHR30437">
    <property type="entry name" value="TRANSCRIPTION ELONGATION FACTOR GREA"/>
    <property type="match status" value="1"/>
</dbReference>
<dbReference type="PANTHER" id="PTHR30437:SF4">
    <property type="entry name" value="TRANSCRIPTION ELONGATION FACTOR GREA"/>
    <property type="match status" value="1"/>
</dbReference>
<dbReference type="Pfam" id="PF01272">
    <property type="entry name" value="GreA_GreB"/>
    <property type="match status" value="1"/>
</dbReference>
<dbReference type="Pfam" id="PF03449">
    <property type="entry name" value="GreA_GreB_N"/>
    <property type="match status" value="1"/>
</dbReference>
<dbReference type="PIRSF" id="PIRSF006092">
    <property type="entry name" value="GreA_GreB"/>
    <property type="match status" value="1"/>
</dbReference>
<dbReference type="SUPFAM" id="SSF54534">
    <property type="entry name" value="FKBP-like"/>
    <property type="match status" value="1"/>
</dbReference>
<dbReference type="SUPFAM" id="SSF46557">
    <property type="entry name" value="GreA transcript cleavage protein, N-terminal domain"/>
    <property type="match status" value="1"/>
</dbReference>
<dbReference type="PROSITE" id="PS00830">
    <property type="entry name" value="GREAB_2"/>
    <property type="match status" value="1"/>
</dbReference>
<evidence type="ECO:0000255" key="1">
    <source>
        <dbReference type="HAMAP-Rule" id="MF_00105"/>
    </source>
</evidence>
<gene>
    <name evidence="1" type="primary">greA</name>
    <name type="ordered locus">BH11700</name>
</gene>